<keyword id="KW-0963">Cytoplasm</keyword>
<keyword id="KW-0238">DNA-binding</keyword>
<keyword id="KW-0520">NAD</keyword>
<keyword id="KW-1185">Reference proteome</keyword>
<keyword id="KW-0678">Repressor</keyword>
<keyword id="KW-0804">Transcription</keyword>
<keyword id="KW-0805">Transcription regulation</keyword>
<sequence>MTADTQIPRATAQRLPIYYYYLSSLHEAGIKRINSTEISEAIKFDAATVRRDFSYFGALGKRGFGYDVSALLDFFSKVLSQDKLNKVAVVGTGNLGQALMKYNFVHSSNIQIVMGFDVDPKKKELKIDNEKGETIPVYSIGDLKSELNKENVTIAILTVPGKSAQEVTDQLVDAGIKGILNFSPIRITVPNSVRVQNVDLTTGMQTLIYFVDNFENIKSAK</sequence>
<accession>Q04E62</accession>
<reference key="1">
    <citation type="journal article" date="2006" name="Proc. Natl. Acad. Sci. U.S.A.">
        <title>Comparative genomics of the lactic acid bacteria.</title>
        <authorList>
            <person name="Makarova K.S."/>
            <person name="Slesarev A."/>
            <person name="Wolf Y.I."/>
            <person name="Sorokin A."/>
            <person name="Mirkin B."/>
            <person name="Koonin E.V."/>
            <person name="Pavlov A."/>
            <person name="Pavlova N."/>
            <person name="Karamychev V."/>
            <person name="Polouchine N."/>
            <person name="Shakhova V."/>
            <person name="Grigoriev I."/>
            <person name="Lou Y."/>
            <person name="Rohksar D."/>
            <person name="Lucas S."/>
            <person name="Huang K."/>
            <person name="Goodstein D.M."/>
            <person name="Hawkins T."/>
            <person name="Plengvidhya V."/>
            <person name="Welker D."/>
            <person name="Hughes J."/>
            <person name="Goh Y."/>
            <person name="Benson A."/>
            <person name="Baldwin K."/>
            <person name="Lee J.-H."/>
            <person name="Diaz-Muniz I."/>
            <person name="Dosti B."/>
            <person name="Smeianov V."/>
            <person name="Wechter W."/>
            <person name="Barabote R."/>
            <person name="Lorca G."/>
            <person name="Altermann E."/>
            <person name="Barrangou R."/>
            <person name="Ganesan B."/>
            <person name="Xie Y."/>
            <person name="Rawsthorne H."/>
            <person name="Tamir D."/>
            <person name="Parker C."/>
            <person name="Breidt F."/>
            <person name="Broadbent J.R."/>
            <person name="Hutkins R."/>
            <person name="O'Sullivan D."/>
            <person name="Steele J."/>
            <person name="Unlu G."/>
            <person name="Saier M.H. Jr."/>
            <person name="Klaenhammer T."/>
            <person name="Richardson P."/>
            <person name="Kozyavkin S."/>
            <person name="Weimer B.C."/>
            <person name="Mills D.A."/>
        </authorList>
    </citation>
    <scope>NUCLEOTIDE SEQUENCE [LARGE SCALE GENOMIC DNA]</scope>
    <source>
        <strain>ATCC BAA-331 / PSU-1</strain>
    </source>
</reference>
<name>REX_OENOB</name>
<feature type="chain" id="PRO_1000065412" description="Redox-sensing transcriptional repressor Rex">
    <location>
        <begin position="1"/>
        <end position="221"/>
    </location>
</feature>
<feature type="DNA-binding region" description="H-T-H motif" evidence="1">
    <location>
        <begin position="17"/>
        <end position="56"/>
    </location>
</feature>
<feature type="binding site" evidence="1">
    <location>
        <begin position="91"/>
        <end position="96"/>
    </location>
    <ligand>
        <name>NAD(+)</name>
        <dbReference type="ChEBI" id="CHEBI:57540"/>
    </ligand>
</feature>
<comment type="function">
    <text evidence="1">Modulates transcription in response to changes in cellular NADH/NAD(+) redox state.</text>
</comment>
<comment type="subunit">
    <text evidence="1">Homodimer.</text>
</comment>
<comment type="subcellular location">
    <subcellularLocation>
        <location evidence="1">Cytoplasm</location>
    </subcellularLocation>
</comment>
<comment type="similarity">
    <text evidence="1">Belongs to the transcriptional regulatory Rex family.</text>
</comment>
<organism>
    <name type="scientific">Oenococcus oeni (strain ATCC BAA-331 / PSU-1)</name>
    <dbReference type="NCBI Taxonomy" id="203123"/>
    <lineage>
        <taxon>Bacteria</taxon>
        <taxon>Bacillati</taxon>
        <taxon>Bacillota</taxon>
        <taxon>Bacilli</taxon>
        <taxon>Lactobacillales</taxon>
        <taxon>Lactobacillaceae</taxon>
        <taxon>Oenococcus</taxon>
    </lineage>
</organism>
<dbReference type="EMBL" id="CP000411">
    <property type="protein sequence ID" value="ABJ57260.1"/>
    <property type="molecule type" value="Genomic_DNA"/>
</dbReference>
<dbReference type="RefSeq" id="WP_002821741.1">
    <property type="nucleotide sequence ID" value="NC_008528.1"/>
</dbReference>
<dbReference type="SMR" id="Q04E62"/>
<dbReference type="STRING" id="203123.OEOE_1398"/>
<dbReference type="KEGG" id="ooe:OEOE_1398"/>
<dbReference type="eggNOG" id="COG2344">
    <property type="taxonomic scope" value="Bacteria"/>
</dbReference>
<dbReference type="HOGENOM" id="CLU_061534_1_1_9"/>
<dbReference type="Proteomes" id="UP000000774">
    <property type="component" value="Chromosome"/>
</dbReference>
<dbReference type="GO" id="GO:0005737">
    <property type="term" value="C:cytoplasm"/>
    <property type="evidence" value="ECO:0007669"/>
    <property type="project" value="UniProtKB-SubCell"/>
</dbReference>
<dbReference type="GO" id="GO:0003677">
    <property type="term" value="F:DNA binding"/>
    <property type="evidence" value="ECO:0007669"/>
    <property type="project" value="UniProtKB-UniRule"/>
</dbReference>
<dbReference type="GO" id="GO:0003700">
    <property type="term" value="F:DNA-binding transcription factor activity"/>
    <property type="evidence" value="ECO:0007669"/>
    <property type="project" value="UniProtKB-UniRule"/>
</dbReference>
<dbReference type="GO" id="GO:0045892">
    <property type="term" value="P:negative regulation of DNA-templated transcription"/>
    <property type="evidence" value="ECO:0007669"/>
    <property type="project" value="InterPro"/>
</dbReference>
<dbReference type="GO" id="GO:0051775">
    <property type="term" value="P:response to redox state"/>
    <property type="evidence" value="ECO:0007669"/>
    <property type="project" value="InterPro"/>
</dbReference>
<dbReference type="Gene3D" id="3.40.50.720">
    <property type="entry name" value="NAD(P)-binding Rossmann-like Domain"/>
    <property type="match status" value="1"/>
</dbReference>
<dbReference type="Gene3D" id="1.10.10.10">
    <property type="entry name" value="Winged helix-like DNA-binding domain superfamily/Winged helix DNA-binding domain"/>
    <property type="match status" value="1"/>
</dbReference>
<dbReference type="HAMAP" id="MF_01131">
    <property type="entry name" value="Rex"/>
    <property type="match status" value="1"/>
</dbReference>
<dbReference type="InterPro" id="IPR003781">
    <property type="entry name" value="CoA-bd"/>
</dbReference>
<dbReference type="InterPro" id="IPR036291">
    <property type="entry name" value="NAD(P)-bd_dom_sf"/>
</dbReference>
<dbReference type="InterPro" id="IPR009718">
    <property type="entry name" value="Rex_DNA-bd_C_dom"/>
</dbReference>
<dbReference type="InterPro" id="IPR022876">
    <property type="entry name" value="Tscrpt_rep_Rex"/>
</dbReference>
<dbReference type="InterPro" id="IPR036388">
    <property type="entry name" value="WH-like_DNA-bd_sf"/>
</dbReference>
<dbReference type="InterPro" id="IPR036390">
    <property type="entry name" value="WH_DNA-bd_sf"/>
</dbReference>
<dbReference type="NCBIfam" id="NF003989">
    <property type="entry name" value="PRK05472.1-3"/>
    <property type="match status" value="1"/>
</dbReference>
<dbReference type="NCBIfam" id="NF003991">
    <property type="entry name" value="PRK05472.1-5"/>
    <property type="match status" value="1"/>
</dbReference>
<dbReference type="NCBIfam" id="NF003994">
    <property type="entry name" value="PRK05472.2-3"/>
    <property type="match status" value="1"/>
</dbReference>
<dbReference type="NCBIfam" id="NF003995">
    <property type="entry name" value="PRK05472.2-4"/>
    <property type="match status" value="1"/>
</dbReference>
<dbReference type="NCBIfam" id="NF003996">
    <property type="entry name" value="PRK05472.2-5"/>
    <property type="match status" value="1"/>
</dbReference>
<dbReference type="PANTHER" id="PTHR35786">
    <property type="entry name" value="REDOX-SENSING TRANSCRIPTIONAL REPRESSOR REX"/>
    <property type="match status" value="1"/>
</dbReference>
<dbReference type="PANTHER" id="PTHR35786:SF1">
    <property type="entry name" value="REDOX-SENSING TRANSCRIPTIONAL REPRESSOR REX 1"/>
    <property type="match status" value="1"/>
</dbReference>
<dbReference type="Pfam" id="PF02629">
    <property type="entry name" value="CoA_binding"/>
    <property type="match status" value="1"/>
</dbReference>
<dbReference type="Pfam" id="PF06971">
    <property type="entry name" value="Put_DNA-bind_N"/>
    <property type="match status" value="1"/>
</dbReference>
<dbReference type="SMART" id="SM00881">
    <property type="entry name" value="CoA_binding"/>
    <property type="match status" value="1"/>
</dbReference>
<dbReference type="SUPFAM" id="SSF51735">
    <property type="entry name" value="NAD(P)-binding Rossmann-fold domains"/>
    <property type="match status" value="1"/>
</dbReference>
<dbReference type="SUPFAM" id="SSF46785">
    <property type="entry name" value="Winged helix' DNA-binding domain"/>
    <property type="match status" value="1"/>
</dbReference>
<proteinExistence type="inferred from homology"/>
<protein>
    <recommendedName>
        <fullName evidence="1">Redox-sensing transcriptional repressor Rex</fullName>
    </recommendedName>
</protein>
<evidence type="ECO:0000255" key="1">
    <source>
        <dbReference type="HAMAP-Rule" id="MF_01131"/>
    </source>
</evidence>
<gene>
    <name evidence="1" type="primary">rex</name>
    <name type="ordered locus">OEOE_1398</name>
</gene>